<protein>
    <recommendedName>
        <fullName evidence="1">Small ribosomal subunit protein uS9</fullName>
    </recommendedName>
    <alternativeName>
        <fullName evidence="2">30S ribosomal protein S9</fullName>
    </alternativeName>
</protein>
<dbReference type="EMBL" id="CP001113">
    <property type="protein sequence ID" value="ACF61924.1"/>
    <property type="molecule type" value="Genomic_DNA"/>
</dbReference>
<dbReference type="RefSeq" id="WP_000829815.1">
    <property type="nucleotide sequence ID" value="NZ_CCMR01000001.1"/>
</dbReference>
<dbReference type="SMR" id="B4T754"/>
<dbReference type="GeneID" id="97393262"/>
<dbReference type="KEGG" id="see:SNSL254_A3607"/>
<dbReference type="HOGENOM" id="CLU_046483_2_1_6"/>
<dbReference type="Proteomes" id="UP000008824">
    <property type="component" value="Chromosome"/>
</dbReference>
<dbReference type="GO" id="GO:0022627">
    <property type="term" value="C:cytosolic small ribosomal subunit"/>
    <property type="evidence" value="ECO:0007669"/>
    <property type="project" value="TreeGrafter"/>
</dbReference>
<dbReference type="GO" id="GO:0003723">
    <property type="term" value="F:RNA binding"/>
    <property type="evidence" value="ECO:0007669"/>
    <property type="project" value="TreeGrafter"/>
</dbReference>
<dbReference type="GO" id="GO:0003735">
    <property type="term" value="F:structural constituent of ribosome"/>
    <property type="evidence" value="ECO:0007669"/>
    <property type="project" value="InterPro"/>
</dbReference>
<dbReference type="GO" id="GO:0006412">
    <property type="term" value="P:translation"/>
    <property type="evidence" value="ECO:0007669"/>
    <property type="project" value="UniProtKB-UniRule"/>
</dbReference>
<dbReference type="FunFam" id="3.30.230.10:FF:000001">
    <property type="entry name" value="30S ribosomal protein S9"/>
    <property type="match status" value="1"/>
</dbReference>
<dbReference type="Gene3D" id="3.30.230.10">
    <property type="match status" value="1"/>
</dbReference>
<dbReference type="HAMAP" id="MF_00532_B">
    <property type="entry name" value="Ribosomal_uS9_B"/>
    <property type="match status" value="1"/>
</dbReference>
<dbReference type="InterPro" id="IPR020568">
    <property type="entry name" value="Ribosomal_Su5_D2-typ_SF"/>
</dbReference>
<dbReference type="InterPro" id="IPR000754">
    <property type="entry name" value="Ribosomal_uS9"/>
</dbReference>
<dbReference type="InterPro" id="IPR023035">
    <property type="entry name" value="Ribosomal_uS9_bac/plastid"/>
</dbReference>
<dbReference type="InterPro" id="IPR020574">
    <property type="entry name" value="Ribosomal_uS9_CS"/>
</dbReference>
<dbReference type="InterPro" id="IPR014721">
    <property type="entry name" value="Ribsml_uS5_D2-typ_fold_subgr"/>
</dbReference>
<dbReference type="NCBIfam" id="NF001099">
    <property type="entry name" value="PRK00132.1"/>
    <property type="match status" value="1"/>
</dbReference>
<dbReference type="PANTHER" id="PTHR21569">
    <property type="entry name" value="RIBOSOMAL PROTEIN S9"/>
    <property type="match status" value="1"/>
</dbReference>
<dbReference type="PANTHER" id="PTHR21569:SF1">
    <property type="entry name" value="SMALL RIBOSOMAL SUBUNIT PROTEIN US9M"/>
    <property type="match status" value="1"/>
</dbReference>
<dbReference type="Pfam" id="PF00380">
    <property type="entry name" value="Ribosomal_S9"/>
    <property type="match status" value="1"/>
</dbReference>
<dbReference type="SUPFAM" id="SSF54211">
    <property type="entry name" value="Ribosomal protein S5 domain 2-like"/>
    <property type="match status" value="1"/>
</dbReference>
<dbReference type="PROSITE" id="PS00360">
    <property type="entry name" value="RIBOSOMAL_S9"/>
    <property type="match status" value="1"/>
</dbReference>
<evidence type="ECO:0000255" key="1">
    <source>
        <dbReference type="HAMAP-Rule" id="MF_00532"/>
    </source>
</evidence>
<evidence type="ECO:0000305" key="2"/>
<proteinExistence type="inferred from homology"/>
<name>RS9_SALNS</name>
<accession>B4T754</accession>
<sequence length="130" mass="14826">MAENQYYGTGRRKSSAARVFIKPGNGKIVINQRSLEQYFGRETARMVVRQPLELVDMVEKLDLYITVKGGGISGQAGAIRHGITRALMEYDESLRGELRKAGFVTRDARQVERKKVGLRKARRRPQFSKR</sequence>
<keyword id="KW-0687">Ribonucleoprotein</keyword>
<keyword id="KW-0689">Ribosomal protein</keyword>
<organism>
    <name type="scientific">Salmonella newport (strain SL254)</name>
    <dbReference type="NCBI Taxonomy" id="423368"/>
    <lineage>
        <taxon>Bacteria</taxon>
        <taxon>Pseudomonadati</taxon>
        <taxon>Pseudomonadota</taxon>
        <taxon>Gammaproteobacteria</taxon>
        <taxon>Enterobacterales</taxon>
        <taxon>Enterobacteriaceae</taxon>
        <taxon>Salmonella</taxon>
    </lineage>
</organism>
<reference key="1">
    <citation type="journal article" date="2011" name="J. Bacteriol.">
        <title>Comparative genomics of 28 Salmonella enterica isolates: evidence for CRISPR-mediated adaptive sublineage evolution.</title>
        <authorList>
            <person name="Fricke W.F."/>
            <person name="Mammel M.K."/>
            <person name="McDermott P.F."/>
            <person name="Tartera C."/>
            <person name="White D.G."/>
            <person name="Leclerc J.E."/>
            <person name="Ravel J."/>
            <person name="Cebula T.A."/>
        </authorList>
    </citation>
    <scope>NUCLEOTIDE SEQUENCE [LARGE SCALE GENOMIC DNA]</scope>
    <source>
        <strain>SL254</strain>
    </source>
</reference>
<gene>
    <name evidence="1" type="primary">rpsI</name>
    <name type="ordered locus">SNSL254_A3607</name>
</gene>
<feature type="chain" id="PRO_1000128171" description="Small ribosomal subunit protein uS9">
    <location>
        <begin position="1"/>
        <end position="130"/>
    </location>
</feature>
<comment type="similarity">
    <text evidence="1">Belongs to the universal ribosomal protein uS9 family.</text>
</comment>